<name>RS6E_THEVO</name>
<proteinExistence type="inferred from homology"/>
<reference key="1">
    <citation type="journal article" date="2000" name="Proc. Natl. Acad. Sci. U.S.A.">
        <title>Archaeal adaptation to higher temperatures revealed by genomic sequence of Thermoplasma volcanium.</title>
        <authorList>
            <person name="Kawashima T."/>
            <person name="Amano N."/>
            <person name="Koike H."/>
            <person name="Makino S."/>
            <person name="Higuchi S."/>
            <person name="Kawashima-Ohya Y."/>
            <person name="Watanabe K."/>
            <person name="Yamazaki M."/>
            <person name="Kanehori K."/>
            <person name="Kawamoto T."/>
            <person name="Nunoshiba T."/>
            <person name="Yamamoto Y."/>
            <person name="Aramaki H."/>
            <person name="Makino K."/>
            <person name="Suzuki M."/>
        </authorList>
    </citation>
    <scope>NUCLEOTIDE SEQUENCE [LARGE SCALE GENOMIC DNA]</scope>
    <source>
        <strain>ATCC 51530 / DSM 4299 / JCM 9571 / NBRC 15438 / GSS1</strain>
    </source>
</reference>
<dbReference type="EMBL" id="BA000011">
    <property type="protein sequence ID" value="BAB60440.1"/>
    <property type="molecule type" value="Genomic_DNA"/>
</dbReference>
<dbReference type="RefSeq" id="WP_010917533.1">
    <property type="nucleotide sequence ID" value="NC_002689.2"/>
</dbReference>
<dbReference type="SMR" id="Q978W7"/>
<dbReference type="STRING" id="273116.gene:9382105"/>
<dbReference type="PaxDb" id="273116-14325537"/>
<dbReference type="GeneID" id="1441415"/>
<dbReference type="KEGG" id="tvo:TVG1338731"/>
<dbReference type="eggNOG" id="arCOG01946">
    <property type="taxonomic scope" value="Archaea"/>
</dbReference>
<dbReference type="HOGENOM" id="CLU_109671_1_1_2"/>
<dbReference type="OrthoDB" id="7793at2157"/>
<dbReference type="PhylomeDB" id="Q978W7"/>
<dbReference type="Proteomes" id="UP000001017">
    <property type="component" value="Chromosome"/>
</dbReference>
<dbReference type="GO" id="GO:1990904">
    <property type="term" value="C:ribonucleoprotein complex"/>
    <property type="evidence" value="ECO:0007669"/>
    <property type="project" value="UniProtKB-KW"/>
</dbReference>
<dbReference type="GO" id="GO:0005840">
    <property type="term" value="C:ribosome"/>
    <property type="evidence" value="ECO:0007669"/>
    <property type="project" value="UniProtKB-KW"/>
</dbReference>
<dbReference type="GO" id="GO:0003735">
    <property type="term" value="F:structural constituent of ribosome"/>
    <property type="evidence" value="ECO:0007669"/>
    <property type="project" value="InterPro"/>
</dbReference>
<dbReference type="GO" id="GO:0006412">
    <property type="term" value="P:translation"/>
    <property type="evidence" value="ECO:0007669"/>
    <property type="project" value="UniProtKB-UniRule"/>
</dbReference>
<dbReference type="HAMAP" id="MF_00512">
    <property type="entry name" value="Ribosomal_eS6"/>
    <property type="match status" value="1"/>
</dbReference>
<dbReference type="InterPro" id="IPR001377">
    <property type="entry name" value="Ribosomal_eS6"/>
</dbReference>
<dbReference type="InterPro" id="IPR020924">
    <property type="entry name" value="Ribosomal_eS6_arc"/>
</dbReference>
<dbReference type="NCBIfam" id="NF003294">
    <property type="entry name" value="PRK04290.1-3"/>
    <property type="match status" value="1"/>
</dbReference>
<dbReference type="PANTHER" id="PTHR11502">
    <property type="entry name" value="40S RIBOSOMAL PROTEIN S6"/>
    <property type="match status" value="1"/>
</dbReference>
<dbReference type="Pfam" id="PF01092">
    <property type="entry name" value="Ribosomal_S6e"/>
    <property type="match status" value="1"/>
</dbReference>
<dbReference type="SMART" id="SM01405">
    <property type="entry name" value="Ribosomal_S6e"/>
    <property type="match status" value="1"/>
</dbReference>
<evidence type="ECO:0000255" key="1">
    <source>
        <dbReference type="HAMAP-Rule" id="MF_00512"/>
    </source>
</evidence>
<evidence type="ECO:0000305" key="2"/>
<protein>
    <recommendedName>
        <fullName evidence="1">Small ribosomal subunit protein eS6</fullName>
    </recommendedName>
    <alternativeName>
        <fullName evidence="2">30S ribosomal protein S6e</fullName>
    </alternativeName>
</protein>
<comment type="similarity">
    <text evidence="1">Belongs to the eukaryotic ribosomal protein eS6 family.</text>
</comment>
<feature type="chain" id="PRO_0000137364" description="Small ribosomal subunit protein eS6">
    <location>
        <begin position="1"/>
        <end position="128"/>
    </location>
</feature>
<organism>
    <name type="scientific">Thermoplasma volcanium (strain ATCC 51530 / DSM 4299 / JCM 9571 / NBRC 15438 / GSS1)</name>
    <dbReference type="NCBI Taxonomy" id="273116"/>
    <lineage>
        <taxon>Archaea</taxon>
        <taxon>Methanobacteriati</taxon>
        <taxon>Thermoplasmatota</taxon>
        <taxon>Thermoplasmata</taxon>
        <taxon>Thermoplasmatales</taxon>
        <taxon>Thermoplasmataceae</taxon>
        <taxon>Thermoplasma</taxon>
    </lineage>
</organism>
<accession>Q978W7</accession>
<keyword id="KW-0687">Ribonucleoprotein</keyword>
<keyword id="KW-0689">Ribosomal protein</keyword>
<sequence length="128" mass="14112">MANSLAIIADPKTGKTYKREIPSERMSSLIGRKIGEEVDGVFFDLVGYKMKITGGSSVDGFAMRPDLQTQGKKQILVKYTSGYRGKNGIRKRITARGSIIGSDITQINLKITQYGPTPIEEKKDDQQA</sequence>
<gene>
    <name evidence="1" type="primary">rps6e</name>
    <name type="ordered locus">TV1298</name>
    <name type="ORF">TVG1338731</name>
</gene>